<organism>
    <name type="scientific">Escherichia coli O157:H7</name>
    <dbReference type="NCBI Taxonomy" id="83334"/>
    <lineage>
        <taxon>Bacteria</taxon>
        <taxon>Pseudomonadati</taxon>
        <taxon>Pseudomonadota</taxon>
        <taxon>Gammaproteobacteria</taxon>
        <taxon>Enterobacterales</taxon>
        <taxon>Enterobacteriaceae</taxon>
        <taxon>Escherichia</taxon>
    </lineage>
</organism>
<sequence length="111" mass="12165">MIWLTLVFASLLSVAGQLCQKQATCFVAISKRRKHIVLWLGLALACLGLAMVLWLLVLQNVPVGIAYPMLSLNFVWVTLAAVKLWHEPVSPRHWCGVAFIIGGIVILGSTV</sequence>
<protein>
    <recommendedName>
        <fullName evidence="2">Probable 4-amino-4-deoxy-L-arabinose-phosphoundecaprenol flippase subunit ArnE</fullName>
        <shortName evidence="2">L-Ara4N-phosphoundecaprenol flippase subunit ArnE</shortName>
    </recommendedName>
    <alternativeName>
        <fullName evidence="2">Undecaprenyl phosphate-aminoarabinose flippase subunit ArnE</fullName>
    </alternativeName>
</protein>
<name>ARNE_ECO57</name>
<gene>
    <name evidence="2" type="primary">arnE</name>
    <name type="ordered locus">Z3516</name>
    <name type="ordered locus">ECs3145.1</name>
</gene>
<evidence type="ECO:0000255" key="1"/>
<evidence type="ECO:0000255" key="2">
    <source>
        <dbReference type="HAMAP-Rule" id="MF_01869"/>
    </source>
</evidence>
<dbReference type="EMBL" id="AE005174">
    <property type="protein sequence ID" value="AAG57389.1"/>
    <property type="molecule type" value="Genomic_DNA"/>
</dbReference>
<dbReference type="EMBL" id="BA000007">
    <property type="status" value="NOT_ANNOTATED_CDS"/>
    <property type="molecule type" value="Genomic_DNA"/>
</dbReference>
<dbReference type="PIR" id="A85866">
    <property type="entry name" value="A85866"/>
</dbReference>
<dbReference type="RefSeq" id="WP_000638034.1">
    <property type="nucleotide sequence ID" value="NZ_VOAI01000001.1"/>
</dbReference>
<dbReference type="SMR" id="Q8X4J8"/>
<dbReference type="STRING" id="155864.Z3516"/>
<dbReference type="KEGG" id="ece:Z3516"/>
<dbReference type="PATRIC" id="fig|83334.175.peg.4681"/>
<dbReference type="eggNOG" id="COG2076">
    <property type="taxonomic scope" value="Bacteria"/>
</dbReference>
<dbReference type="OMA" id="TCAGQLC"/>
<dbReference type="UniPathway" id="UPA00030"/>
<dbReference type="Proteomes" id="UP000000558">
    <property type="component" value="Chromosome"/>
</dbReference>
<dbReference type="Proteomes" id="UP000002519">
    <property type="component" value="Chromosome"/>
</dbReference>
<dbReference type="GO" id="GO:0005886">
    <property type="term" value="C:plasma membrane"/>
    <property type="evidence" value="ECO:0007669"/>
    <property type="project" value="UniProtKB-SubCell"/>
</dbReference>
<dbReference type="GO" id="GO:1901505">
    <property type="term" value="F:carbohydrate derivative transmembrane transporter activity"/>
    <property type="evidence" value="ECO:0007669"/>
    <property type="project" value="InterPro"/>
</dbReference>
<dbReference type="GO" id="GO:0009245">
    <property type="term" value="P:lipid A biosynthetic process"/>
    <property type="evidence" value="ECO:0007669"/>
    <property type="project" value="UniProtKB-UniRule"/>
</dbReference>
<dbReference type="GO" id="GO:0009103">
    <property type="term" value="P:lipopolysaccharide biosynthetic process"/>
    <property type="evidence" value="ECO:0007669"/>
    <property type="project" value="UniProtKB-UniRule"/>
</dbReference>
<dbReference type="FunFam" id="1.10.3730.20:FF:000002">
    <property type="entry name" value="Probable 4-amino-4-deoxy-L-arabinose-phosphoundecaprenol flippase subunit ArnE"/>
    <property type="match status" value="1"/>
</dbReference>
<dbReference type="Gene3D" id="1.10.3730.20">
    <property type="match status" value="1"/>
</dbReference>
<dbReference type="HAMAP" id="MF_01869">
    <property type="entry name" value="Flippase_ArnE"/>
    <property type="match status" value="1"/>
</dbReference>
<dbReference type="InterPro" id="IPR000620">
    <property type="entry name" value="EamA_dom"/>
</dbReference>
<dbReference type="InterPro" id="IPR022883">
    <property type="entry name" value="Flippase_ArnE"/>
</dbReference>
<dbReference type="InterPro" id="IPR000390">
    <property type="entry name" value="Small_drug/metabolite_transptr"/>
</dbReference>
<dbReference type="NCBIfam" id="NF011625">
    <property type="entry name" value="PRK15051.1"/>
    <property type="match status" value="1"/>
</dbReference>
<dbReference type="PANTHER" id="PTHR30561:SF23">
    <property type="entry name" value="4-AMINO-4-DEOXY-L-ARABINOSE-PHOSPHOUNDECAPRENOL FLIPPASE SUBUNIT ARNE-RELATED"/>
    <property type="match status" value="1"/>
</dbReference>
<dbReference type="PANTHER" id="PTHR30561">
    <property type="entry name" value="SMR FAMILY PROTON-DEPENDENT DRUG EFFLUX TRANSPORTER SUGE"/>
    <property type="match status" value="1"/>
</dbReference>
<dbReference type="Pfam" id="PF00892">
    <property type="entry name" value="EamA"/>
    <property type="match status" value="1"/>
</dbReference>
<dbReference type="SUPFAM" id="SSF103481">
    <property type="entry name" value="Multidrug resistance efflux transporter EmrE"/>
    <property type="match status" value="1"/>
</dbReference>
<accession>Q8X4J8</accession>
<keyword id="KW-0997">Cell inner membrane</keyword>
<keyword id="KW-1003">Cell membrane</keyword>
<keyword id="KW-0441">Lipid A biosynthesis</keyword>
<keyword id="KW-0444">Lipid biosynthesis</keyword>
<keyword id="KW-0443">Lipid metabolism</keyword>
<keyword id="KW-0448">Lipopolysaccharide biosynthesis</keyword>
<keyword id="KW-0472">Membrane</keyword>
<keyword id="KW-1185">Reference proteome</keyword>
<keyword id="KW-0812">Transmembrane</keyword>
<keyword id="KW-1133">Transmembrane helix</keyword>
<keyword id="KW-0813">Transport</keyword>
<feature type="chain" id="PRO_0000382964" description="Probable 4-amino-4-deoxy-L-arabinose-phosphoundecaprenol flippase subunit ArnE">
    <location>
        <begin position="1"/>
        <end position="111"/>
    </location>
</feature>
<feature type="topological domain" description="Cytoplasmic" evidence="1">
    <location>
        <begin position="1"/>
        <end position="35"/>
    </location>
</feature>
<feature type="transmembrane region" description="Helical" evidence="2">
    <location>
        <begin position="36"/>
        <end position="56"/>
    </location>
</feature>
<feature type="topological domain" description="Periplasmic" evidence="1">
    <location>
        <begin position="57"/>
        <end position="60"/>
    </location>
</feature>
<feature type="transmembrane region" description="Helical" evidence="2">
    <location>
        <begin position="61"/>
        <end position="81"/>
    </location>
</feature>
<feature type="topological domain" description="Cytoplasmic" evidence="1">
    <location>
        <begin position="82"/>
        <end position="87"/>
    </location>
</feature>
<feature type="transmembrane region" description="Helical" evidence="2">
    <location>
        <begin position="88"/>
        <end position="108"/>
    </location>
</feature>
<feature type="topological domain" description="Periplasmic" evidence="1">
    <location>
        <begin position="109"/>
        <end position="111"/>
    </location>
</feature>
<feature type="domain" description="EamA" evidence="2">
    <location>
        <begin position="40"/>
        <end position="109"/>
    </location>
</feature>
<proteinExistence type="inferred from homology"/>
<reference key="1">
    <citation type="journal article" date="2001" name="Nature">
        <title>Genome sequence of enterohaemorrhagic Escherichia coli O157:H7.</title>
        <authorList>
            <person name="Perna N.T."/>
            <person name="Plunkett G. III"/>
            <person name="Burland V."/>
            <person name="Mau B."/>
            <person name="Glasner J.D."/>
            <person name="Rose D.J."/>
            <person name="Mayhew G.F."/>
            <person name="Evans P.S."/>
            <person name="Gregor J."/>
            <person name="Kirkpatrick H.A."/>
            <person name="Posfai G."/>
            <person name="Hackett J."/>
            <person name="Klink S."/>
            <person name="Boutin A."/>
            <person name="Shao Y."/>
            <person name="Miller L."/>
            <person name="Grotbeck E.J."/>
            <person name="Davis N.W."/>
            <person name="Lim A."/>
            <person name="Dimalanta E.T."/>
            <person name="Potamousis K."/>
            <person name="Apodaca J."/>
            <person name="Anantharaman T.S."/>
            <person name="Lin J."/>
            <person name="Yen G."/>
            <person name="Schwartz D.C."/>
            <person name="Welch R.A."/>
            <person name="Blattner F.R."/>
        </authorList>
    </citation>
    <scope>NUCLEOTIDE SEQUENCE [LARGE SCALE GENOMIC DNA]</scope>
    <source>
        <strain>O157:H7 / EDL933 / ATCC 700927 / EHEC</strain>
    </source>
</reference>
<reference key="2">
    <citation type="journal article" date="2001" name="DNA Res.">
        <title>Complete genome sequence of enterohemorrhagic Escherichia coli O157:H7 and genomic comparison with a laboratory strain K-12.</title>
        <authorList>
            <person name="Hayashi T."/>
            <person name="Makino K."/>
            <person name="Ohnishi M."/>
            <person name="Kurokawa K."/>
            <person name="Ishii K."/>
            <person name="Yokoyama K."/>
            <person name="Han C.-G."/>
            <person name="Ohtsubo E."/>
            <person name="Nakayama K."/>
            <person name="Murata T."/>
            <person name="Tanaka M."/>
            <person name="Tobe T."/>
            <person name="Iida T."/>
            <person name="Takami H."/>
            <person name="Honda T."/>
            <person name="Sasakawa C."/>
            <person name="Ogasawara N."/>
            <person name="Yasunaga T."/>
            <person name="Kuhara S."/>
            <person name="Shiba T."/>
            <person name="Hattori M."/>
            <person name="Shinagawa H."/>
        </authorList>
    </citation>
    <scope>NUCLEOTIDE SEQUENCE [LARGE SCALE GENOMIC DNA]</scope>
    <source>
        <strain>O157:H7 / Sakai / RIMD 0509952 / EHEC</strain>
    </source>
</reference>
<comment type="function">
    <text evidence="2">Translocates 4-amino-4-deoxy-L-arabinose-phosphoundecaprenol (alpha-L-Ara4N-phosphoundecaprenol) from the cytoplasmic to the periplasmic side of the inner membrane.</text>
</comment>
<comment type="pathway">
    <text evidence="2">Bacterial outer membrane biogenesis; lipopolysaccharide biosynthesis.</text>
</comment>
<comment type="subunit">
    <text evidence="2">Heterodimer of ArnE and ArnF.</text>
</comment>
<comment type="subcellular location">
    <subcellularLocation>
        <location evidence="2">Cell inner membrane</location>
        <topology evidence="2">Multi-pass membrane protein</topology>
    </subcellularLocation>
</comment>
<comment type="similarity">
    <text evidence="2">Belongs to the ArnE family.</text>
</comment>